<sequence length="465" mass="51227">MLLVWSLALLLGAVAGKEVCYDRLGCFSDDSPWSGIVERPLKVLPWSPADVNTRFLLYTNENQDNYQQITADSSRIQSSNFKTNRKTRFIIHGFIDKGEESWLANMCKKMFQVESVNCICVDWKGGSRTGYTQASQNIRIVGAEVAYFVDFLRTQLGYSPSNVHVIGHSLGSHAAGEAGRRTNGAIGRITGLDPAEPCFEGTPELVRLDPSDAQFVDAIHTDGAPIVPNLGFGMSQTVGHLDFFPNGGIEMPGCQKNILSQIVDIDGIWEGTRDFAACNHLRSYKYYTDSIVNPTGFAAFSCASYSVFSANKCFPCPSGGCPQMGHYADRYSGKTNGVGQKFYLNTGDKSNFSRWRYKVSVTLSGQKVTGHILVSLFGNAGNSKQYEIYKGSLHPGYTHSNEFDSDVDVGDLQRVKFIWYNNVINPSLPRVGASSISVERNDGRVFKFCSAETVREDVLLTLNAC</sequence>
<dbReference type="EC" id="3.1.1.3" evidence="2"/>
<dbReference type="EMBL" id="AF027293">
    <property type="protein sequence ID" value="AAC40162.2"/>
    <property type="molecule type" value="mRNA"/>
</dbReference>
<dbReference type="EMBL" id="AF395870">
    <property type="protein sequence ID" value="AAK72259.1"/>
    <property type="molecule type" value="mRNA"/>
</dbReference>
<dbReference type="EMBL" id="AF177402">
    <property type="protein sequence ID" value="AAD51123.2"/>
    <property type="molecule type" value="mRNA"/>
</dbReference>
<dbReference type="EMBL" id="AF177403">
    <property type="protein sequence ID" value="AAD51124.1"/>
    <property type="molecule type" value="mRNA"/>
</dbReference>
<dbReference type="SMR" id="O88354"/>
<dbReference type="FunCoup" id="O88354">
    <property type="interactions" value="276"/>
</dbReference>
<dbReference type="STRING" id="43179.ENSSTOP00000002036"/>
<dbReference type="ESTHER" id="icttr-k7gt76">
    <property type="family name" value="Pancreatic_lipase"/>
</dbReference>
<dbReference type="eggNOG" id="ENOG502QUK7">
    <property type="taxonomic scope" value="Eukaryota"/>
</dbReference>
<dbReference type="InParanoid" id="O88354"/>
<dbReference type="Proteomes" id="UP000005215">
    <property type="component" value="Unassembled WGS sequence"/>
</dbReference>
<dbReference type="GO" id="GO:0005615">
    <property type="term" value="C:extracellular space"/>
    <property type="evidence" value="ECO:0007669"/>
    <property type="project" value="TreeGrafter"/>
</dbReference>
<dbReference type="GO" id="GO:0047376">
    <property type="term" value="F:all-trans-retinyl-palmitate hydrolase, all-trans-retinol forming activity"/>
    <property type="evidence" value="ECO:0007669"/>
    <property type="project" value="RHEA"/>
</dbReference>
<dbReference type="GO" id="GO:0004465">
    <property type="term" value="F:lipoprotein lipase activity"/>
    <property type="evidence" value="ECO:0007669"/>
    <property type="project" value="TreeGrafter"/>
</dbReference>
<dbReference type="GO" id="GO:0046872">
    <property type="term" value="F:metal ion binding"/>
    <property type="evidence" value="ECO:0007669"/>
    <property type="project" value="UniProtKB-KW"/>
</dbReference>
<dbReference type="GO" id="GO:0004806">
    <property type="term" value="F:triacylglycerol lipase activity"/>
    <property type="evidence" value="ECO:0000250"/>
    <property type="project" value="UniProtKB"/>
</dbReference>
<dbReference type="GO" id="GO:0042750">
    <property type="term" value="P:hibernation"/>
    <property type="evidence" value="ECO:0007669"/>
    <property type="project" value="UniProtKB-KW"/>
</dbReference>
<dbReference type="GO" id="GO:0016042">
    <property type="term" value="P:lipid catabolic process"/>
    <property type="evidence" value="ECO:0007669"/>
    <property type="project" value="UniProtKB-KW"/>
</dbReference>
<dbReference type="CDD" id="cd00707">
    <property type="entry name" value="Pancreat_lipase_like"/>
    <property type="match status" value="1"/>
</dbReference>
<dbReference type="CDD" id="cd01759">
    <property type="entry name" value="PLAT_PL"/>
    <property type="match status" value="1"/>
</dbReference>
<dbReference type="FunFam" id="3.40.50.1820:FF:000033">
    <property type="entry name" value="Pancreatic triacylglycerol lipase"/>
    <property type="match status" value="1"/>
</dbReference>
<dbReference type="FunFam" id="2.60.60.20:FF:000003">
    <property type="entry name" value="Triacylglycerol lipase"/>
    <property type="match status" value="1"/>
</dbReference>
<dbReference type="Gene3D" id="3.40.50.1820">
    <property type="entry name" value="alpha/beta hydrolase"/>
    <property type="match status" value="1"/>
</dbReference>
<dbReference type="Gene3D" id="2.60.60.20">
    <property type="entry name" value="PLAT/LH2 domain"/>
    <property type="match status" value="1"/>
</dbReference>
<dbReference type="InterPro" id="IPR029058">
    <property type="entry name" value="AB_hydrolase_fold"/>
</dbReference>
<dbReference type="InterPro" id="IPR013818">
    <property type="entry name" value="Lipase"/>
</dbReference>
<dbReference type="InterPro" id="IPR016272">
    <property type="entry name" value="Lipase_LIPH"/>
</dbReference>
<dbReference type="InterPro" id="IPR033906">
    <property type="entry name" value="Lipase_N"/>
</dbReference>
<dbReference type="InterPro" id="IPR002331">
    <property type="entry name" value="Lipase_panc"/>
</dbReference>
<dbReference type="InterPro" id="IPR001024">
    <property type="entry name" value="PLAT/LH2_dom"/>
</dbReference>
<dbReference type="InterPro" id="IPR036392">
    <property type="entry name" value="PLAT/LH2_dom_sf"/>
</dbReference>
<dbReference type="InterPro" id="IPR000734">
    <property type="entry name" value="TAG_lipase"/>
</dbReference>
<dbReference type="PANTHER" id="PTHR11610">
    <property type="entry name" value="LIPASE"/>
    <property type="match status" value="1"/>
</dbReference>
<dbReference type="PANTHER" id="PTHR11610:SF147">
    <property type="entry name" value="PANCREATIC TRIACYLGLYCEROL LIPASE"/>
    <property type="match status" value="1"/>
</dbReference>
<dbReference type="Pfam" id="PF00151">
    <property type="entry name" value="Lipase"/>
    <property type="match status" value="1"/>
</dbReference>
<dbReference type="Pfam" id="PF01477">
    <property type="entry name" value="PLAT"/>
    <property type="match status" value="1"/>
</dbReference>
<dbReference type="PIRSF" id="PIRSF000865">
    <property type="entry name" value="Lipoprotein_lipase_LIPH"/>
    <property type="match status" value="1"/>
</dbReference>
<dbReference type="PRINTS" id="PR00823">
    <property type="entry name" value="PANCLIPASE"/>
</dbReference>
<dbReference type="PRINTS" id="PR00821">
    <property type="entry name" value="TAGLIPASE"/>
</dbReference>
<dbReference type="SMART" id="SM00308">
    <property type="entry name" value="LH2"/>
    <property type="match status" value="1"/>
</dbReference>
<dbReference type="SUPFAM" id="SSF53474">
    <property type="entry name" value="alpha/beta-Hydrolases"/>
    <property type="match status" value="1"/>
</dbReference>
<dbReference type="SUPFAM" id="SSF49723">
    <property type="entry name" value="Lipase/lipooxygenase domain (PLAT/LH2 domain)"/>
    <property type="match status" value="1"/>
</dbReference>
<dbReference type="PROSITE" id="PS00120">
    <property type="entry name" value="LIPASE_SER"/>
    <property type="match status" value="1"/>
</dbReference>
<dbReference type="PROSITE" id="PS50095">
    <property type="entry name" value="PLAT"/>
    <property type="match status" value="1"/>
</dbReference>
<protein>
    <recommendedName>
        <fullName evidence="7">Pancreatic triacylglycerol lipase</fullName>
        <shortName>PL</shortName>
        <shortName>PTL</shortName>
        <shortName>Pancreatic lipase</shortName>
        <ecNumber evidence="2">3.1.1.3</ecNumber>
    </recommendedName>
    <alternativeName>
        <fullName>Heart pancreatic lipase</fullName>
    </alternativeName>
    <alternativeName>
        <fullName>PL-h</fullName>
    </alternativeName>
</protein>
<accession>O88354</accession>
<accession>Q9QWF3</accession>
<gene>
    <name type="primary">PNLIP</name>
    <name type="synonym">PTL</name>
</gene>
<feature type="signal peptide" evidence="1">
    <location>
        <begin position="1"/>
        <end position="16"/>
    </location>
</feature>
<feature type="chain" id="PRO_0000250516" description="Pancreatic triacylglycerol lipase">
    <location>
        <begin position="17"/>
        <end position="465"/>
    </location>
</feature>
<feature type="domain" description="PLAT" evidence="3">
    <location>
        <begin position="355"/>
        <end position="465"/>
    </location>
</feature>
<feature type="active site" description="Nucleophile" evidence="1">
    <location>
        <position position="169"/>
    </location>
</feature>
<feature type="active site" description="Charge relay system" evidence="4">
    <location>
        <position position="193"/>
    </location>
</feature>
<feature type="active site" description="Charge relay system" evidence="4">
    <location>
        <position position="280"/>
    </location>
</feature>
<feature type="binding site" evidence="1">
    <location>
        <position position="204"/>
    </location>
    <ligand>
        <name>Ca(2+)</name>
        <dbReference type="ChEBI" id="CHEBI:29108"/>
    </ligand>
</feature>
<feature type="binding site" evidence="1">
    <location>
        <position position="207"/>
    </location>
    <ligand>
        <name>Ca(2+)</name>
        <dbReference type="ChEBI" id="CHEBI:29108"/>
    </ligand>
</feature>
<feature type="binding site" evidence="1">
    <location>
        <position position="209"/>
    </location>
    <ligand>
        <name>Ca(2+)</name>
        <dbReference type="ChEBI" id="CHEBI:29108"/>
    </ligand>
</feature>
<feature type="binding site" evidence="1">
    <location>
        <position position="212"/>
    </location>
    <ligand>
        <name>Ca(2+)</name>
        <dbReference type="ChEBI" id="CHEBI:29108"/>
    </ligand>
</feature>
<feature type="disulfide bond" evidence="3">
    <location>
        <begin position="20"/>
        <end position="26"/>
    </location>
</feature>
<feature type="disulfide bond" evidence="3">
    <location>
        <begin position="107"/>
        <end position="118"/>
    </location>
</feature>
<feature type="disulfide bond" evidence="3">
    <location>
        <begin position="254"/>
        <end position="278"/>
    </location>
</feature>
<feature type="disulfide bond" evidence="3">
    <location>
        <begin position="302"/>
        <end position="313"/>
    </location>
</feature>
<feature type="disulfide bond" evidence="3">
    <location>
        <begin position="316"/>
        <end position="321"/>
    </location>
</feature>
<feature type="disulfide bond" evidence="3">
    <location>
        <begin position="449"/>
        <end position="465"/>
    </location>
</feature>
<feature type="sequence conflict" description="In Ref. 3; AAD51123." evidence="7" ref="3">
    <original>Q</original>
    <variation>H</variation>
    <location>
        <position position="133"/>
    </location>
</feature>
<organism>
    <name type="scientific">Ictidomys tridecemlineatus</name>
    <name type="common">Thirteen-lined ground squirrel</name>
    <name type="synonym">Spermophilus tridecemlineatus</name>
    <dbReference type="NCBI Taxonomy" id="43179"/>
    <lineage>
        <taxon>Eukaryota</taxon>
        <taxon>Metazoa</taxon>
        <taxon>Chordata</taxon>
        <taxon>Craniata</taxon>
        <taxon>Vertebrata</taxon>
        <taxon>Euteleostomi</taxon>
        <taxon>Mammalia</taxon>
        <taxon>Eutheria</taxon>
        <taxon>Euarchontoglires</taxon>
        <taxon>Glires</taxon>
        <taxon>Rodentia</taxon>
        <taxon>Sciuromorpha</taxon>
        <taxon>Sciuridae</taxon>
        <taxon>Xerinae</taxon>
        <taxon>Marmotini</taxon>
        <taxon>Ictidomys</taxon>
    </lineage>
</organism>
<keyword id="KW-0106">Calcium</keyword>
<keyword id="KW-1015">Disulfide bond</keyword>
<keyword id="KW-0909">Hibernation</keyword>
<keyword id="KW-0378">Hydrolase</keyword>
<keyword id="KW-0442">Lipid degradation</keyword>
<keyword id="KW-0443">Lipid metabolism</keyword>
<keyword id="KW-0479">Metal-binding</keyword>
<keyword id="KW-1185">Reference proteome</keyword>
<keyword id="KW-0964">Secreted</keyword>
<keyword id="KW-0732">Signal</keyword>
<comment type="function">
    <text evidence="2 6">Plays an important role in fat metabolism. It preferentially splits the esters of long-chain fatty acids at positions 1 and 3, producing mainly 2-monoacylglycerol and free fatty acids, and shows considerably higher activity against insoluble emulsified substrates than against soluble ones (By similarity). Plays a role in hibernation as a key enzyme that shows high activity at low temperatures. When expressed in the hibernating heart it liberates fatty acids from triglycerides at temperatures as low as 0 degrees Celsius.</text>
</comment>
<comment type="catalytic activity">
    <reaction evidence="2">
        <text>a triacylglycerol + H2O = a diacylglycerol + a fatty acid + H(+)</text>
        <dbReference type="Rhea" id="RHEA:12044"/>
        <dbReference type="ChEBI" id="CHEBI:15377"/>
        <dbReference type="ChEBI" id="CHEBI:15378"/>
        <dbReference type="ChEBI" id="CHEBI:17855"/>
        <dbReference type="ChEBI" id="CHEBI:18035"/>
        <dbReference type="ChEBI" id="CHEBI:28868"/>
        <dbReference type="EC" id="3.1.1.3"/>
    </reaction>
    <physiologicalReaction direction="left-to-right" evidence="2">
        <dbReference type="Rhea" id="RHEA:12045"/>
    </physiologicalReaction>
</comment>
<comment type="catalytic activity">
    <reaction evidence="2">
        <text>1,2,3-tributanoylglycerol + H2O = dibutanoylglycerol + butanoate + H(+)</text>
        <dbReference type="Rhea" id="RHEA:40475"/>
        <dbReference type="ChEBI" id="CHEBI:15377"/>
        <dbReference type="ChEBI" id="CHEBI:15378"/>
        <dbReference type="ChEBI" id="CHEBI:17968"/>
        <dbReference type="ChEBI" id="CHEBI:35020"/>
        <dbReference type="ChEBI" id="CHEBI:76478"/>
    </reaction>
    <physiologicalReaction direction="left-to-right" evidence="2">
        <dbReference type="Rhea" id="RHEA:40476"/>
    </physiologicalReaction>
</comment>
<comment type="catalytic activity">
    <reaction evidence="2">
        <text>1,2,3-tri-(9Z-octadecenoyl)-glycerol + H2O = di-(9Z)-octadecenoylglycerol + (9Z)-octadecenoate + H(+)</text>
        <dbReference type="Rhea" id="RHEA:38575"/>
        <dbReference type="ChEBI" id="CHEBI:15377"/>
        <dbReference type="ChEBI" id="CHEBI:15378"/>
        <dbReference type="ChEBI" id="CHEBI:30823"/>
        <dbReference type="ChEBI" id="CHEBI:53753"/>
        <dbReference type="ChEBI" id="CHEBI:75945"/>
    </reaction>
    <physiologicalReaction direction="left-to-right" evidence="2">
        <dbReference type="Rhea" id="RHEA:38576"/>
    </physiologicalReaction>
</comment>
<comment type="catalytic activity">
    <reaction evidence="2">
        <text>all-trans-retinyl hexadecanoate + H2O = all-trans-retinol + hexadecanoate + H(+)</text>
        <dbReference type="Rhea" id="RHEA:13933"/>
        <dbReference type="ChEBI" id="CHEBI:7896"/>
        <dbReference type="ChEBI" id="CHEBI:15377"/>
        <dbReference type="ChEBI" id="CHEBI:15378"/>
        <dbReference type="ChEBI" id="CHEBI:17336"/>
        <dbReference type="ChEBI" id="CHEBI:17616"/>
    </reaction>
    <physiologicalReaction direction="left-to-right" evidence="2">
        <dbReference type="Rhea" id="RHEA:13934"/>
    </physiologicalReaction>
</comment>
<comment type="catalytic activity">
    <reaction evidence="2">
        <text>1,2-di-(9Z-octadecenoyl)-glycerol + H2O = (9Z-octadecenoyl)-glycerol + (9Z)-octadecenoate + H(+)</text>
        <dbReference type="Rhea" id="RHEA:38455"/>
        <dbReference type="ChEBI" id="CHEBI:15377"/>
        <dbReference type="ChEBI" id="CHEBI:15378"/>
        <dbReference type="ChEBI" id="CHEBI:30823"/>
        <dbReference type="ChEBI" id="CHEBI:52323"/>
        <dbReference type="ChEBI" id="CHEBI:75937"/>
    </reaction>
    <physiologicalReaction direction="left-to-right" evidence="2">
        <dbReference type="Rhea" id="RHEA:38456"/>
    </physiologicalReaction>
</comment>
<comment type="activity regulation">
    <text evidence="2">Inhibited by bile salts, is reactivated by (pro)colipase/CLPS.</text>
</comment>
<comment type="subunit">
    <text evidence="2">Forms a 1:1 stoichiometric complex with (pro)colipase/CLPS.</text>
</comment>
<comment type="subcellular location">
    <subcellularLocation>
        <location evidence="2">Secreted</location>
    </subcellularLocation>
</comment>
<comment type="tissue specificity">
    <text evidence="5">Expressed in many tissues with highest expression in liver. During hibernation there is a significant increases in expression in heart, white adipose tissue (WAT), and testis; but not in pancreas.</text>
</comment>
<comment type="induction">
    <text evidence="6">Up-regulated during hibernation.</text>
</comment>
<comment type="similarity">
    <text evidence="7">Belongs to the AB hydrolase superfamily. Lipase family.</text>
</comment>
<reference key="1">
    <citation type="journal article" date="1998" name="Proc. Natl. Acad. Sci. U.S.A.">
        <title>Low-temperature carbon utilization is regulated by novel gene activity in the heart of a hibernating mammal.</title>
        <authorList>
            <person name="Andrews M.T."/>
            <person name="Squire T.L."/>
            <person name="Bowen C.M."/>
            <person name="Rollins M.B."/>
        </authorList>
    </citation>
    <scope>NUCLEOTIDE SEQUENCE [MRNA]</scope>
    <scope>INDUCTION</scope>
    <scope>FUNCTION IN HIBERNATION</scope>
    <source>
        <tissue>Heart</tissue>
    </source>
</reference>
<reference key="2">
    <citation type="journal article" date="2003" name="Physiol. Genomics">
        <title>Pancreatic triacylglycerol lipase in a hibernating mammal. I. Novel genomic organization.</title>
        <authorList>
            <person name="Squire T.L."/>
            <person name="Andrews M.T."/>
        </authorList>
    </citation>
    <scope>NUCLEOTIDE SEQUENCE [MRNA]</scope>
    <source>
        <tissue>Pancreas</tissue>
    </source>
</reference>
<reference key="3">
    <citation type="submission" date="1999-09" db="EMBL/GenBank/DDBJ databases">
        <authorList>
            <person name="Bauer V.W."/>
            <person name="Andrews M.T."/>
        </authorList>
    </citation>
    <scope>NUCLEOTIDE SEQUENCE [MRNA]</scope>
    <source>
        <tissue>White adipose tissue</tissue>
    </source>
</reference>
<reference key="4">
    <citation type="journal article" date="2003" name="Physiol. Genomics">
        <title>Pancreatic triacylglycerol lipase in a hibernating mammal. II. Cold-adapted function and differential expression.</title>
        <authorList>
            <person name="Squire T.L."/>
            <person name="Lowe M.E."/>
            <person name="Bauer V.W."/>
            <person name="Andrews M.T."/>
        </authorList>
    </citation>
    <scope>TISSUE SPECIFICITY</scope>
</reference>
<proteinExistence type="evidence at protein level"/>
<evidence type="ECO:0000250" key="1"/>
<evidence type="ECO:0000250" key="2">
    <source>
        <dbReference type="UniProtKB" id="P16233"/>
    </source>
</evidence>
<evidence type="ECO:0000255" key="3">
    <source>
        <dbReference type="PROSITE-ProRule" id="PRU00152"/>
    </source>
</evidence>
<evidence type="ECO:0000255" key="4">
    <source>
        <dbReference type="PROSITE-ProRule" id="PRU10037"/>
    </source>
</evidence>
<evidence type="ECO:0000269" key="5">
    <source>
    </source>
</evidence>
<evidence type="ECO:0000269" key="6">
    <source>
    </source>
</evidence>
<evidence type="ECO:0000305" key="7"/>
<name>LIPP_ICTTR</name>